<sequence length="127" mass="14247">MEIFGNVVSGLGEGRFFVGLTPYKNKFKELTGFTPFEGTLNVKLKHNFNLDEFNPIEFDGFEIDGKKYFGGKVLLVKLFDKSGHSINCAIVAPKKTDHSKKTLELIAPVHLRKFLSLNNSDVVKIVI</sequence>
<proteinExistence type="inferred from homology"/>
<protein>
    <recommendedName>
        <fullName evidence="1">Riboflavin kinase</fullName>
        <shortName evidence="1">RFK</shortName>
        <ecNumber evidence="1">2.7.1.161</ecNumber>
    </recommendedName>
    <alternativeName>
        <fullName evidence="1">CTP-dependent riboflavin kinase</fullName>
    </alternativeName>
    <alternativeName>
        <fullName evidence="1">CTP:riboflavin 5'-phosphotransferase</fullName>
    </alternativeName>
    <alternativeName>
        <fullName evidence="1">Flavokinase</fullName>
    </alternativeName>
</protein>
<organism>
    <name type="scientific">Methanococcus maripaludis (strain C7 / ATCC BAA-1331)</name>
    <dbReference type="NCBI Taxonomy" id="426368"/>
    <lineage>
        <taxon>Archaea</taxon>
        <taxon>Methanobacteriati</taxon>
        <taxon>Methanobacteriota</taxon>
        <taxon>Methanomada group</taxon>
        <taxon>Methanococci</taxon>
        <taxon>Methanococcales</taxon>
        <taxon>Methanococcaceae</taxon>
        <taxon>Methanococcus</taxon>
    </lineage>
</organism>
<keyword id="KW-0285">Flavoprotein</keyword>
<keyword id="KW-0288">FMN</keyword>
<keyword id="KW-0418">Kinase</keyword>
<keyword id="KW-0460">Magnesium</keyword>
<keyword id="KW-0479">Metal-binding</keyword>
<keyword id="KW-0547">Nucleotide-binding</keyword>
<keyword id="KW-0808">Transferase</keyword>
<reference key="1">
    <citation type="submission" date="2007-06" db="EMBL/GenBank/DDBJ databases">
        <title>Complete sequence of Methanococcus maripaludis C7.</title>
        <authorList>
            <consortium name="US DOE Joint Genome Institute"/>
            <person name="Copeland A."/>
            <person name="Lucas S."/>
            <person name="Lapidus A."/>
            <person name="Barry K."/>
            <person name="Glavina del Rio T."/>
            <person name="Dalin E."/>
            <person name="Tice H."/>
            <person name="Pitluck S."/>
            <person name="Clum A."/>
            <person name="Schmutz J."/>
            <person name="Larimer F."/>
            <person name="Land M."/>
            <person name="Hauser L."/>
            <person name="Kyrpides N."/>
            <person name="Anderson I."/>
            <person name="Sieprawska-Lupa M."/>
            <person name="Whitman W.B."/>
            <person name="Richardson P."/>
        </authorList>
    </citation>
    <scope>NUCLEOTIDE SEQUENCE [LARGE SCALE GENOMIC DNA]</scope>
    <source>
        <strain>C7 / ATCC BAA-1331</strain>
    </source>
</reference>
<accession>A6VIH3</accession>
<comment type="function">
    <text evidence="1">Catalyzes the CTP-dependent phosphorylation of riboflavin (vitamin B2) to form flavin mononucleotide (FMN).</text>
</comment>
<comment type="catalytic activity">
    <reaction evidence="1">
        <text>riboflavin + CTP = CDP + FMN + H(+)</text>
        <dbReference type="Rhea" id="RHEA:25021"/>
        <dbReference type="ChEBI" id="CHEBI:15378"/>
        <dbReference type="ChEBI" id="CHEBI:37563"/>
        <dbReference type="ChEBI" id="CHEBI:57986"/>
        <dbReference type="ChEBI" id="CHEBI:58069"/>
        <dbReference type="ChEBI" id="CHEBI:58210"/>
        <dbReference type="EC" id="2.7.1.161"/>
    </reaction>
</comment>
<comment type="cofactor">
    <cofactor evidence="1">
        <name>Mg(2+)</name>
        <dbReference type="ChEBI" id="CHEBI:18420"/>
    </cofactor>
    <text evidence="1">Binds 1 Mg(2+) ion per subunit.</text>
</comment>
<comment type="pathway">
    <text evidence="1">Cofactor biosynthesis; FMN biosynthesis; FMN from riboflavin (CTP route): step 1/1.</text>
</comment>
<comment type="similarity">
    <text evidence="1">Belongs to the archaeal riboflavin kinase family.</text>
</comment>
<evidence type="ECO:0000255" key="1">
    <source>
        <dbReference type="HAMAP-Rule" id="MF_01285"/>
    </source>
</evidence>
<name>RIFK_METM7</name>
<feature type="chain" id="PRO_0000322073" description="Riboflavin kinase">
    <location>
        <begin position="1"/>
        <end position="127"/>
    </location>
</feature>
<feature type="binding site" evidence="1">
    <location>
        <begin position="10"/>
        <end position="15"/>
    </location>
    <ligand>
        <name>CDP</name>
        <dbReference type="ChEBI" id="CHEBI:58069"/>
    </ligand>
</feature>
<feature type="binding site" evidence="1">
    <location>
        <position position="39"/>
    </location>
    <ligand>
        <name>Mg(2+)</name>
        <dbReference type="ChEBI" id="CHEBI:18420"/>
    </ligand>
</feature>
<feature type="binding site" evidence="1">
    <location>
        <position position="41"/>
    </location>
    <ligand>
        <name>Mg(2+)</name>
        <dbReference type="ChEBI" id="CHEBI:18420"/>
    </ligand>
</feature>
<feature type="binding site" evidence="1">
    <location>
        <position position="96"/>
    </location>
    <ligand>
        <name>FMN</name>
        <dbReference type="ChEBI" id="CHEBI:58210"/>
    </ligand>
</feature>
<feature type="binding site" evidence="1">
    <location>
        <position position="104"/>
    </location>
    <ligand>
        <name>FMN</name>
        <dbReference type="ChEBI" id="CHEBI:58210"/>
    </ligand>
</feature>
<feature type="binding site" evidence="1">
    <location>
        <begin position="109"/>
        <end position="112"/>
    </location>
    <ligand>
        <name>CDP</name>
        <dbReference type="ChEBI" id="CHEBI:58069"/>
    </ligand>
</feature>
<gene>
    <name evidence="1" type="primary">ribK</name>
    <name type="ordered locus">MmarC7_1183</name>
</gene>
<dbReference type="EC" id="2.7.1.161" evidence="1"/>
<dbReference type="EMBL" id="CP000745">
    <property type="protein sequence ID" value="ABR66249.1"/>
    <property type="molecule type" value="Genomic_DNA"/>
</dbReference>
<dbReference type="SMR" id="A6VIH3"/>
<dbReference type="STRING" id="426368.MmarC7_1183"/>
<dbReference type="KEGG" id="mmz:MmarC7_1183"/>
<dbReference type="eggNOG" id="arCOG01904">
    <property type="taxonomic scope" value="Archaea"/>
</dbReference>
<dbReference type="HOGENOM" id="CLU_140165_0_0_2"/>
<dbReference type="OrthoDB" id="30955at2157"/>
<dbReference type="UniPathway" id="UPA00276">
    <property type="reaction ID" value="UER00929"/>
</dbReference>
<dbReference type="GO" id="GO:0000287">
    <property type="term" value="F:magnesium ion binding"/>
    <property type="evidence" value="ECO:0007669"/>
    <property type="project" value="UniProtKB-UniRule"/>
</dbReference>
<dbReference type="GO" id="GO:0000166">
    <property type="term" value="F:nucleotide binding"/>
    <property type="evidence" value="ECO:0007669"/>
    <property type="project" value="UniProtKB-UniRule"/>
</dbReference>
<dbReference type="GO" id="GO:0008531">
    <property type="term" value="F:riboflavin kinase activity"/>
    <property type="evidence" value="ECO:0007669"/>
    <property type="project" value="InterPro"/>
</dbReference>
<dbReference type="GO" id="GO:0009398">
    <property type="term" value="P:FMN biosynthetic process"/>
    <property type="evidence" value="ECO:0007669"/>
    <property type="project" value="UniProtKB-UniRule"/>
</dbReference>
<dbReference type="GO" id="GO:0009231">
    <property type="term" value="P:riboflavin biosynthetic process"/>
    <property type="evidence" value="ECO:0007669"/>
    <property type="project" value="InterPro"/>
</dbReference>
<dbReference type="Gene3D" id="2.40.30.30">
    <property type="entry name" value="Riboflavin kinase-like"/>
    <property type="match status" value="1"/>
</dbReference>
<dbReference type="HAMAP" id="MF_01285">
    <property type="entry name" value="Riboflavin_kinase"/>
    <property type="match status" value="1"/>
</dbReference>
<dbReference type="InterPro" id="IPR053397">
    <property type="entry name" value="Archaeal_Riboflavin_Kinase"/>
</dbReference>
<dbReference type="InterPro" id="IPR039063">
    <property type="entry name" value="RibK_CTP-dep"/>
</dbReference>
<dbReference type="InterPro" id="IPR023470">
    <property type="entry name" value="Riboflavin_kinase_archaeal"/>
</dbReference>
<dbReference type="InterPro" id="IPR023602">
    <property type="entry name" value="Riboflavin_kinase_CTP-dep"/>
</dbReference>
<dbReference type="InterPro" id="IPR023465">
    <property type="entry name" value="Riboflavin_kinase_dom_sf"/>
</dbReference>
<dbReference type="NCBIfam" id="NF040694">
    <property type="entry name" value="ribK_Meth"/>
    <property type="match status" value="1"/>
</dbReference>
<dbReference type="PANTHER" id="PTHR40706">
    <property type="entry name" value="RIBOFLAVIN KINASE"/>
    <property type="match status" value="1"/>
</dbReference>
<dbReference type="PANTHER" id="PTHR40706:SF1">
    <property type="entry name" value="RIBOFLAVIN KINASE"/>
    <property type="match status" value="1"/>
</dbReference>
<dbReference type="Pfam" id="PF01982">
    <property type="entry name" value="CTP-dep_RFKase"/>
    <property type="match status" value="1"/>
</dbReference>
<dbReference type="SUPFAM" id="SSF82114">
    <property type="entry name" value="Riboflavin kinase-like"/>
    <property type="match status" value="1"/>
</dbReference>